<evidence type="ECO:0000250" key="1">
    <source>
        <dbReference type="UniProtKB" id="Q6VY07"/>
    </source>
</evidence>
<evidence type="ECO:0000250" key="2">
    <source>
        <dbReference type="UniProtKB" id="Q8K212"/>
    </source>
</evidence>
<evidence type="ECO:0000255" key="3"/>
<evidence type="ECO:0000256" key="4">
    <source>
        <dbReference type="SAM" id="MobiDB-lite"/>
    </source>
</evidence>
<evidence type="ECO:0000269" key="5">
    <source>
    </source>
</evidence>
<evidence type="ECO:0000303" key="6">
    <source>
    </source>
</evidence>
<evidence type="ECO:0000305" key="7"/>
<evidence type="ECO:0007744" key="8">
    <source>
    </source>
</evidence>
<organism>
    <name type="scientific">Rattus norvegicus</name>
    <name type="common">Rat</name>
    <dbReference type="NCBI Taxonomy" id="10116"/>
    <lineage>
        <taxon>Eukaryota</taxon>
        <taxon>Metazoa</taxon>
        <taxon>Chordata</taxon>
        <taxon>Craniata</taxon>
        <taxon>Vertebrata</taxon>
        <taxon>Euteleostomi</taxon>
        <taxon>Mammalia</taxon>
        <taxon>Eutheria</taxon>
        <taxon>Euarchontoglires</taxon>
        <taxon>Glires</taxon>
        <taxon>Rodentia</taxon>
        <taxon>Myomorpha</taxon>
        <taxon>Muroidea</taxon>
        <taxon>Muridae</taxon>
        <taxon>Murinae</taxon>
        <taxon>Rattus</taxon>
    </lineage>
</organism>
<feature type="initiator methionine" description="Removed" evidence="1">
    <location>
        <position position="1"/>
    </location>
</feature>
<feature type="chain" id="PRO_0000058173" description="Phosphofurin acidic cluster sorting protein 1">
    <location>
        <begin position="2"/>
        <end position="961"/>
    </location>
</feature>
<feature type="region of interest" description="Disordered" evidence="4">
    <location>
        <begin position="1"/>
        <end position="70"/>
    </location>
</feature>
<feature type="region of interest" description="Disordered" evidence="4">
    <location>
        <begin position="76"/>
        <end position="95"/>
    </location>
</feature>
<feature type="region of interest" description="Disordered" evidence="4">
    <location>
        <begin position="260"/>
        <end position="297"/>
    </location>
</feature>
<feature type="region of interest" description="Disordered" evidence="4">
    <location>
        <begin position="375"/>
        <end position="426"/>
    </location>
</feature>
<feature type="region of interest" description="Disordered" evidence="4">
    <location>
        <begin position="475"/>
        <end position="540"/>
    </location>
</feature>
<feature type="region of interest" description="Disordered" evidence="4">
    <location>
        <begin position="758"/>
        <end position="802"/>
    </location>
</feature>
<feature type="coiled-coil region" evidence="3">
    <location>
        <begin position="351"/>
        <end position="375"/>
    </location>
</feature>
<feature type="compositionally biased region" description="Gly residues" evidence="4">
    <location>
        <begin position="1"/>
        <end position="19"/>
    </location>
</feature>
<feature type="compositionally biased region" description="Low complexity" evidence="4">
    <location>
        <begin position="20"/>
        <end position="30"/>
    </location>
</feature>
<feature type="compositionally biased region" description="Pro residues" evidence="4">
    <location>
        <begin position="31"/>
        <end position="46"/>
    </location>
</feature>
<feature type="compositionally biased region" description="Low complexity" evidence="4">
    <location>
        <begin position="51"/>
        <end position="70"/>
    </location>
</feature>
<feature type="compositionally biased region" description="Basic and acidic residues" evidence="4">
    <location>
        <begin position="260"/>
        <end position="271"/>
    </location>
</feature>
<feature type="compositionally biased region" description="Acidic residues" evidence="4">
    <location>
        <begin position="274"/>
        <end position="291"/>
    </location>
</feature>
<feature type="compositionally biased region" description="Polar residues" evidence="4">
    <location>
        <begin position="404"/>
        <end position="426"/>
    </location>
</feature>
<feature type="compositionally biased region" description="Low complexity" evidence="4">
    <location>
        <begin position="768"/>
        <end position="802"/>
    </location>
</feature>
<feature type="modified residue" description="N-acetylalanine" evidence="1">
    <location>
        <position position="2"/>
    </location>
</feature>
<feature type="modified residue" description="Phosphoserine" evidence="2">
    <location>
        <position position="28"/>
    </location>
</feature>
<feature type="modified residue" description="Phosphothreonine" evidence="2">
    <location>
        <position position="44"/>
    </location>
</feature>
<feature type="modified residue" description="Phosphotyrosine" evidence="2">
    <location>
        <position position="249"/>
    </location>
</feature>
<feature type="modified residue" description="Phosphoserine" evidence="8">
    <location>
        <position position="377"/>
    </location>
</feature>
<feature type="modified residue" description="Phosphoserine" evidence="8">
    <location>
        <position position="379"/>
    </location>
</feature>
<feature type="modified residue" description="Phosphoserine" evidence="1">
    <location>
        <position position="428"/>
    </location>
</feature>
<feature type="modified residue" description="Phosphoserine" evidence="1">
    <location>
        <position position="493"/>
    </location>
</feature>
<feature type="modified residue" description="Phosphothreonine" evidence="1">
    <location>
        <position position="502"/>
    </location>
</feature>
<feature type="modified residue" description="Phosphoserine" evidence="1">
    <location>
        <position position="517"/>
    </location>
</feature>
<feature type="modified residue" description="Phosphoserine" evidence="8">
    <location>
        <position position="526"/>
    </location>
</feature>
<feature type="modified residue" description="Phosphoserine" evidence="8">
    <location>
        <position position="527"/>
    </location>
</feature>
<feature type="modified residue" description="Phosphoserine" evidence="1">
    <location>
        <position position="529"/>
    </location>
</feature>
<feature type="modified residue" description="Phosphoserine" evidence="1">
    <location>
        <position position="532"/>
    </location>
</feature>
<feature type="splice variant" id="VSP_011558" description="In isoform PACS-1b." evidence="6">
    <original>IPRKVVYDQLNQILVSDAA</original>
    <variation>VILGSSRFRTPFLDFSLFL</variation>
    <location>
        <begin position="541"/>
        <end position="559"/>
    </location>
</feature>
<feature type="splice variant" id="VSP_011559" description="In isoform PACS-1b." evidence="6">
    <location>
        <begin position="560"/>
        <end position="961"/>
    </location>
</feature>
<keyword id="KW-0007">Acetylation</keyword>
<keyword id="KW-0025">Alternative splicing</keyword>
<keyword id="KW-0175">Coiled coil</keyword>
<keyword id="KW-0333">Golgi apparatus</keyword>
<keyword id="KW-0597">Phosphoprotein</keyword>
<keyword id="KW-1185">Reference proteome</keyword>
<dbReference type="EMBL" id="AF076183">
    <property type="protein sequence ID" value="AAC31815.1"/>
    <property type="molecule type" value="mRNA"/>
</dbReference>
<dbReference type="EMBL" id="AF076184">
    <property type="protein sequence ID" value="AAC31816.1"/>
    <property type="molecule type" value="mRNA"/>
</dbReference>
<dbReference type="RefSeq" id="NP_599233.1">
    <molecule id="O88588-1"/>
    <property type="nucleotide sequence ID" value="NM_134406.1"/>
</dbReference>
<dbReference type="BioGRID" id="251254">
    <property type="interactions" value="1"/>
</dbReference>
<dbReference type="CORUM" id="O88588"/>
<dbReference type="FunCoup" id="O88588">
    <property type="interactions" value="3262"/>
</dbReference>
<dbReference type="IntAct" id="O88588">
    <property type="interactions" value="1"/>
</dbReference>
<dbReference type="MINT" id="O88588"/>
<dbReference type="STRING" id="10116.ENSRNOP00000027632"/>
<dbReference type="GlyGen" id="O88588">
    <property type="glycosylation" value="2 sites, 1 O-linked glycan (1 site)"/>
</dbReference>
<dbReference type="iPTMnet" id="O88588"/>
<dbReference type="PhosphoSitePlus" id="O88588"/>
<dbReference type="SwissPalm" id="O88588"/>
<dbReference type="jPOST" id="O88588"/>
<dbReference type="PaxDb" id="10116-ENSRNOP00000027632"/>
<dbReference type="Ensembl" id="ENSRNOT00000027632.6">
    <molecule id="O88588-1"/>
    <property type="protein sequence ID" value="ENSRNOP00000027632.5"/>
    <property type="gene ID" value="ENSRNOG00000020350.6"/>
</dbReference>
<dbReference type="GeneID" id="171444"/>
<dbReference type="KEGG" id="rno:171444"/>
<dbReference type="UCSC" id="RGD:620579">
    <molecule id="O88588-1"/>
    <property type="organism name" value="rat"/>
</dbReference>
<dbReference type="AGR" id="RGD:620579"/>
<dbReference type="CTD" id="55690"/>
<dbReference type="RGD" id="620579">
    <property type="gene designation" value="Pacs1"/>
</dbReference>
<dbReference type="eggNOG" id="KOG3709">
    <property type="taxonomic scope" value="Eukaryota"/>
</dbReference>
<dbReference type="GeneTree" id="ENSGT00950000183209"/>
<dbReference type="InParanoid" id="O88588"/>
<dbReference type="OrthoDB" id="54953at9989"/>
<dbReference type="PhylomeDB" id="O88588"/>
<dbReference type="PRO" id="PR:O88588"/>
<dbReference type="Proteomes" id="UP000002494">
    <property type="component" value="Chromosome 1"/>
</dbReference>
<dbReference type="GO" id="GO:0030137">
    <property type="term" value="C:COPI-coated vesicle"/>
    <property type="evidence" value="ECO:0000266"/>
    <property type="project" value="RGD"/>
</dbReference>
<dbReference type="GO" id="GO:0005794">
    <property type="term" value="C:Golgi apparatus"/>
    <property type="evidence" value="ECO:0007669"/>
    <property type="project" value="UniProtKB-SubCell"/>
</dbReference>
<dbReference type="GO" id="GO:0048471">
    <property type="term" value="C:perinuclear region of cytoplasm"/>
    <property type="evidence" value="ECO:0000314"/>
    <property type="project" value="RGD"/>
</dbReference>
<dbReference type="GO" id="GO:0044325">
    <property type="term" value="F:transmembrane transporter binding"/>
    <property type="evidence" value="ECO:0000266"/>
    <property type="project" value="RGD"/>
</dbReference>
<dbReference type="GO" id="GO:0002260">
    <property type="term" value="P:lymphocyte homeostasis"/>
    <property type="evidence" value="ECO:0000250"/>
    <property type="project" value="UniProtKB"/>
</dbReference>
<dbReference type="GO" id="GO:0034067">
    <property type="term" value="P:protein localization to Golgi apparatus"/>
    <property type="evidence" value="ECO:0000266"/>
    <property type="project" value="RGD"/>
</dbReference>
<dbReference type="GO" id="GO:0072659">
    <property type="term" value="P:protein localization to plasma membrane"/>
    <property type="evidence" value="ECO:0000266"/>
    <property type="project" value="RGD"/>
</dbReference>
<dbReference type="InterPro" id="IPR019381">
    <property type="entry name" value="Phosphofurin_acidic_CS-1"/>
</dbReference>
<dbReference type="PANTHER" id="PTHR13280">
    <property type="entry name" value="PHOSPHOFURIN ACIDIC CLUSTER SORTING PROTEIN"/>
    <property type="match status" value="1"/>
</dbReference>
<dbReference type="PANTHER" id="PTHR13280:SF16">
    <property type="entry name" value="PHOSPHOFURIN ACIDIC CLUSTER SORTING PROTEIN 1"/>
    <property type="match status" value="1"/>
</dbReference>
<dbReference type="Pfam" id="PF25332">
    <property type="entry name" value="C2_PACS_N"/>
    <property type="match status" value="1"/>
</dbReference>
<dbReference type="Pfam" id="PF10254">
    <property type="entry name" value="Pacs-1"/>
    <property type="match status" value="1"/>
</dbReference>
<comment type="function">
    <text evidence="2 5">Coat protein that is involved in the localization of trans-Golgi network (TGN) membrane proteins that contain acidic cluster sorting motifs. Controls the endosome-to-Golgi trafficking of furin and mannose-6-phosphate receptor by connecting the acidic-cluster-containing cytoplasmic domain of these molecules with the adapter-protein complex-1 (AP-1) of endosomal clathrin-coated membrane pits. Required for normal ER Ca2+ handling in lymphocytes. Together with WDR37, it plays an essential role in lymphocyte development, quiescence and survival. Required for stabilizing peripheral lymphocyte populations (By similarity).</text>
</comment>
<comment type="subunit">
    <text evidence="1 2">Associates with AP-1 and AP-3 but not with AP-2 complexes (By similarity). Interacts with FURIN (By similarity). Forms a ternary complex with furin and AP-1 (PubMed:9695949). Interacts with PKD2 (via acidic region) (By similarity). Interacts with SORL1 (By similarity). Interacts with WDR37 (By similarity).</text>
</comment>
<comment type="subcellular location">
    <subcellularLocation>
        <location evidence="5">Golgi apparatus</location>
        <location evidence="5">trans-Golgi network</location>
    </subcellularLocation>
    <text evidence="5">Localizes in the perinuclear region, probably the TGN.</text>
</comment>
<comment type="alternative products">
    <event type="alternative splicing"/>
    <isoform>
        <id>O88588-1</id>
        <name>PACS-1a</name>
        <sequence type="displayed"/>
    </isoform>
    <isoform>
        <id>O88588-2</id>
        <name>PACS-1b</name>
        <sequence type="described" ref="VSP_011558 VSP_011559"/>
    </isoform>
</comment>
<comment type="similarity">
    <text evidence="7">Belongs to the PACS family.</text>
</comment>
<proteinExistence type="evidence at protein level"/>
<accession>O88588</accession>
<accession>O88589</accession>
<name>PACS1_RAT</name>
<gene>
    <name type="primary">Pacs1</name>
</gene>
<protein>
    <recommendedName>
        <fullName>Phosphofurin acidic cluster sorting protein 1</fullName>
        <shortName>PACS-1</shortName>
    </recommendedName>
</protein>
<sequence>MAERGGAGGGPGGAGGGSSQRGSGVAQSPQQQPPQQPSQPQQPTPPKLAQATSSSSSTSAAAASSSSSSTSTSMAVAVASGSAPPGGPGPGRTPAPVQMNLYATWEVDRSSSSCVPRLFSLTLKKLVMLKEMDKDLNSVVIAVKLQGSKRILRSNEIILPASGLVETELQLTFSLQYPHFLKRDANKLQIMLQRRKRYKNRTILGYKTLAVGLINMAEVMQHPNEGALVLGLHSNVKDVSVPVAEIKIYSLSSQPIDHEGIKSKLSDRSPDIDNYSEEEEESFSSEQEGSDDPLHGQDLFYEDEDLRKVKKTRRKLTSTSAITRQPNIKQKFVALLKRFKVSDEVGFGLEHVSREQIREVEEDLDELYDSLEMYNPSDSGPEMEETESILSTPKPKLKPFFEGMSQSSSQTEIGSLNSKGSLGKDTTSPMELAALEKVKSTWIKNQDDSLTETDTLEITDQDMFGDASTSLVVPEKVKTPMKSSKADLQGSASPSKVEGTHTPRQKRSTPLKERQLSKPLSERTNSSDSERSPDLGHSTQIPRKVVYDQLNQILVSDAALPENVILVNTTDWQGQYVAELLQDQRKPVVCTCSTVEVQAVLSALLTRIQRYCNCNSSMPRPVKVAAVGSQSYLSSILRFFVKSLASKTPDWLGHMRFLIVPLGSHPVAKYLGSVDSRYSSTFLDSAWRDLFSRSEPPVSEPLDVVGRVMQYVNGATTTHQLPVAEAMLTCRHKFPDEDSYQKFIPFIGVVKVGLVEDSPSTAGDGDDSPVVSLTVPSTSPPSSSGLSRDATATPPSSPSMSSALAIVGSPNSPYGDVIGLQVDYWLGHPGERRREGDKRDASSKNTLKSVFRSVQVSRLPHAGEAQLSGTMAMTVVTKEKNKKVPTIFLSKKPREKEVDSKSQVIEGISRLICSAKQQQTMLRVSIDGVEWSDIKFFQLAAQWPTHVKHFPVGLFSGSKPT</sequence>
<reference key="1">
    <citation type="journal article" date="1998" name="Cell">
        <title>PACS-1 defines a novel gene family of cytosolic sorting proteins required for trans-Golgi network localization.</title>
        <authorList>
            <person name="Wan L."/>
            <person name="Molloy S.S."/>
            <person name="Thomas L."/>
            <person name="Liu G."/>
            <person name="Xiang Y."/>
            <person name="Rybak S.L."/>
            <person name="Thomas G."/>
        </authorList>
    </citation>
    <scope>NUCLEOTIDE SEQUENCE [MRNA] (ISOFORMS PACS-1A AND PACS-1B)</scope>
    <scope>SUBUNIT</scope>
    <scope>SUBCELLULAR LOCATION</scope>
    <scope>FUNCTION</scope>
    <source>
        <tissue>Brain</tissue>
    </source>
</reference>
<reference key="2">
    <citation type="journal article" date="2012" name="Nat. Commun.">
        <title>Quantitative maps of protein phosphorylation sites across 14 different rat organs and tissues.</title>
        <authorList>
            <person name="Lundby A."/>
            <person name="Secher A."/>
            <person name="Lage K."/>
            <person name="Nordsborg N.B."/>
            <person name="Dmytriyev A."/>
            <person name="Lundby C."/>
            <person name="Olsen J.V."/>
        </authorList>
    </citation>
    <scope>PHOSPHORYLATION [LARGE SCALE ANALYSIS] AT SER-377; SER-379; SER-526 AND SER-527</scope>
    <scope>IDENTIFICATION BY MASS SPECTROMETRY [LARGE SCALE ANALYSIS]</scope>
</reference>